<dbReference type="EC" id="3.5.1.103" evidence="1"/>
<dbReference type="EMBL" id="CP001737">
    <property type="protein sequence ID" value="ACV80597.1"/>
    <property type="molecule type" value="Genomic_DNA"/>
</dbReference>
<dbReference type="SMR" id="C8XJN6"/>
<dbReference type="STRING" id="479431.Namu_4309"/>
<dbReference type="KEGG" id="nml:Namu_4309"/>
<dbReference type="eggNOG" id="COG2120">
    <property type="taxonomic scope" value="Bacteria"/>
</dbReference>
<dbReference type="HOGENOM" id="CLU_049311_2_1_11"/>
<dbReference type="InParanoid" id="C8XJN6"/>
<dbReference type="Proteomes" id="UP000002218">
    <property type="component" value="Chromosome"/>
</dbReference>
<dbReference type="GO" id="GO:0035595">
    <property type="term" value="F:N-acetylglucosaminylinositol deacetylase activity"/>
    <property type="evidence" value="ECO:0007669"/>
    <property type="project" value="UniProtKB-EC"/>
</dbReference>
<dbReference type="GO" id="GO:0008270">
    <property type="term" value="F:zinc ion binding"/>
    <property type="evidence" value="ECO:0007669"/>
    <property type="project" value="UniProtKB-UniRule"/>
</dbReference>
<dbReference type="GO" id="GO:0010125">
    <property type="term" value="P:mycothiol biosynthetic process"/>
    <property type="evidence" value="ECO:0007669"/>
    <property type="project" value="UniProtKB-UniRule"/>
</dbReference>
<dbReference type="Gene3D" id="3.40.50.10320">
    <property type="entry name" value="LmbE-like"/>
    <property type="match status" value="1"/>
</dbReference>
<dbReference type="HAMAP" id="MF_01696">
    <property type="entry name" value="MshB"/>
    <property type="match status" value="1"/>
</dbReference>
<dbReference type="InterPro" id="IPR003737">
    <property type="entry name" value="GlcNAc_PI_deacetylase-related"/>
</dbReference>
<dbReference type="InterPro" id="IPR024078">
    <property type="entry name" value="LmbE-like_dom_sf"/>
</dbReference>
<dbReference type="InterPro" id="IPR017810">
    <property type="entry name" value="Mycothiol_biosynthesis_MshB"/>
</dbReference>
<dbReference type="NCBIfam" id="TIGR03445">
    <property type="entry name" value="mycothiol_MshB"/>
    <property type="match status" value="1"/>
</dbReference>
<dbReference type="PANTHER" id="PTHR12993:SF26">
    <property type="entry name" value="1D-MYO-INOSITOL 2-ACETAMIDO-2-DEOXY-ALPHA-D-GLUCOPYRANOSIDE DEACETYLASE"/>
    <property type="match status" value="1"/>
</dbReference>
<dbReference type="PANTHER" id="PTHR12993">
    <property type="entry name" value="N-ACETYLGLUCOSAMINYL-PHOSPHATIDYLINOSITOL DE-N-ACETYLASE-RELATED"/>
    <property type="match status" value="1"/>
</dbReference>
<dbReference type="Pfam" id="PF02585">
    <property type="entry name" value="PIG-L"/>
    <property type="match status" value="1"/>
</dbReference>
<dbReference type="SUPFAM" id="SSF102588">
    <property type="entry name" value="LmbE-like"/>
    <property type="match status" value="1"/>
</dbReference>
<feature type="chain" id="PRO_0000400210" description="1D-myo-inositol 2-acetamido-2-deoxy-alpha-D-glucopyranoside deacetylase">
    <location>
        <begin position="1"/>
        <end position="293"/>
    </location>
</feature>
<feature type="binding site" evidence="1">
    <location>
        <position position="16"/>
    </location>
    <ligand>
        <name>Zn(2+)</name>
        <dbReference type="ChEBI" id="CHEBI:29105"/>
    </ligand>
</feature>
<feature type="binding site" evidence="1">
    <location>
        <position position="19"/>
    </location>
    <ligand>
        <name>Zn(2+)</name>
        <dbReference type="ChEBI" id="CHEBI:29105"/>
    </ligand>
</feature>
<feature type="binding site" evidence="1">
    <location>
        <position position="156"/>
    </location>
    <ligand>
        <name>Zn(2+)</name>
        <dbReference type="ChEBI" id="CHEBI:29105"/>
    </ligand>
</feature>
<reference key="1">
    <citation type="submission" date="2009-09" db="EMBL/GenBank/DDBJ databases">
        <title>The complete genome of Nakamurella multipartita DSM 44233.</title>
        <authorList>
            <consortium name="US DOE Joint Genome Institute (JGI-PGF)"/>
            <person name="Lucas S."/>
            <person name="Copeland A."/>
            <person name="Lapidus A."/>
            <person name="Glavina del Rio T."/>
            <person name="Dalin E."/>
            <person name="Tice H."/>
            <person name="Bruce D."/>
            <person name="Goodwin L."/>
            <person name="Pitluck S."/>
            <person name="Kyrpides N."/>
            <person name="Mavromatis K."/>
            <person name="Ivanova N."/>
            <person name="Ovchinnikova G."/>
            <person name="Sims D."/>
            <person name="Meincke L."/>
            <person name="Brettin T."/>
            <person name="Detter J.C."/>
            <person name="Han C."/>
            <person name="Larimer F."/>
            <person name="Land M."/>
            <person name="Hauser L."/>
            <person name="Markowitz V."/>
            <person name="Cheng J.-F."/>
            <person name="Hugenholtz P."/>
            <person name="Woyke T."/>
            <person name="Wu D."/>
            <person name="Klenk H.-P."/>
            <person name="Eisen J.A."/>
        </authorList>
    </citation>
    <scope>NUCLEOTIDE SEQUENCE [LARGE SCALE GENOMIC DNA]</scope>
    <source>
        <strain>ATCC 700099 / DSM 44233 / CIP 104796 / JCM 9543 / NBRC 105858 / Y-104</strain>
    </source>
</reference>
<accession>C8XJN6</accession>
<keyword id="KW-0378">Hydrolase</keyword>
<keyword id="KW-0479">Metal-binding</keyword>
<keyword id="KW-1185">Reference proteome</keyword>
<keyword id="KW-0862">Zinc</keyword>
<organism>
    <name type="scientific">Nakamurella multipartita (strain ATCC 700099 / DSM 44233 / CIP 104796 / JCM 9543 / NBRC 105858 / Y-104)</name>
    <name type="common">Microsphaera multipartita</name>
    <dbReference type="NCBI Taxonomy" id="479431"/>
    <lineage>
        <taxon>Bacteria</taxon>
        <taxon>Bacillati</taxon>
        <taxon>Actinomycetota</taxon>
        <taxon>Actinomycetes</taxon>
        <taxon>Nakamurellales</taxon>
        <taxon>Nakamurellaceae</taxon>
        <taxon>Nakamurella</taxon>
    </lineage>
</organism>
<comment type="function">
    <text evidence="1">Catalyzes the deacetylation of 1D-myo-inositol 2-acetamido-2-deoxy-alpha-D-glucopyranoside (GlcNAc-Ins) in the mycothiol biosynthesis pathway.</text>
</comment>
<comment type="catalytic activity">
    <reaction evidence="1">
        <text>1D-myo-inositol 2-acetamido-2-deoxy-alpha-D-glucopyranoside + H2O = 1D-myo-inositol 2-amino-2-deoxy-alpha-D-glucopyranoside + acetate</text>
        <dbReference type="Rhea" id="RHEA:26180"/>
        <dbReference type="ChEBI" id="CHEBI:15377"/>
        <dbReference type="ChEBI" id="CHEBI:30089"/>
        <dbReference type="ChEBI" id="CHEBI:52442"/>
        <dbReference type="ChEBI" id="CHEBI:58886"/>
        <dbReference type="EC" id="3.5.1.103"/>
    </reaction>
</comment>
<comment type="cofactor">
    <cofactor evidence="1">
        <name>Zn(2+)</name>
        <dbReference type="ChEBI" id="CHEBI:29105"/>
    </cofactor>
    <text evidence="1">Binds 1 zinc ion per subunit.</text>
</comment>
<comment type="similarity">
    <text evidence="1">Belongs to the MshB deacetylase family.</text>
</comment>
<protein>
    <recommendedName>
        <fullName evidence="1">1D-myo-inositol 2-acetamido-2-deoxy-alpha-D-glucopyranoside deacetylase</fullName>
        <shortName evidence="1">GlcNAc-Ins deacetylase</shortName>
        <ecNumber evidence="1">3.5.1.103</ecNumber>
    </recommendedName>
    <alternativeName>
        <fullName>N-acetyl-1-D-myo-inositol 2-amino-2-deoxy-alpha-D-glucopyranoside deacetylase</fullName>
    </alternativeName>
</protein>
<name>MSHB_NAKMY</name>
<gene>
    <name evidence="1" type="primary">mshB</name>
    <name type="ordered locus">Namu_4309</name>
</gene>
<proteinExistence type="inferred from homology"/>
<sequence>MYVADVPARLLAVHAHPDDESLTMAGTLAGAALAGAEVTLVTATLGEEGEVIGDELQGLIAARADQLGGYRLTELAAAGAALGVRERVMLGGLGAFRDSGMAGTPSAEHPRAFIRAQRGGPDHDRAARALAREIDRVRPHVLLTYDEDGGYGHPDHVAVHQVVLAALPLAAWPVPRVLAVIRPRTVTQADFAALTTPPGYLAAAADEVGFLAADDSVAVAVPVTAAAARRRAALAAHATQVELLPGEVFALSNRIAQPLPAAEYFRVLAGSPVPVGPDWTVPADVAAGLDLDR</sequence>
<evidence type="ECO:0000255" key="1">
    <source>
        <dbReference type="HAMAP-Rule" id="MF_01696"/>
    </source>
</evidence>